<gene>
    <name type="primary">yunC</name>
    <name type="ordered locus">BSU32360</name>
</gene>
<feature type="chain" id="PRO_0000390356" description="Uncharacterized protein YunC">
    <location>
        <begin position="1"/>
        <end position="101"/>
    </location>
</feature>
<organism>
    <name type="scientific">Bacillus subtilis (strain 168)</name>
    <dbReference type="NCBI Taxonomy" id="224308"/>
    <lineage>
        <taxon>Bacteria</taxon>
        <taxon>Bacillati</taxon>
        <taxon>Bacillota</taxon>
        <taxon>Bacilli</taxon>
        <taxon>Bacillales</taxon>
        <taxon>Bacillaceae</taxon>
        <taxon>Bacillus</taxon>
    </lineage>
</organism>
<accession>O32132</accession>
<reference key="1">
    <citation type="journal article" date="1997" name="Nature">
        <title>The complete genome sequence of the Gram-positive bacterium Bacillus subtilis.</title>
        <authorList>
            <person name="Kunst F."/>
            <person name="Ogasawara N."/>
            <person name="Moszer I."/>
            <person name="Albertini A.M."/>
            <person name="Alloni G."/>
            <person name="Azevedo V."/>
            <person name="Bertero M.G."/>
            <person name="Bessieres P."/>
            <person name="Bolotin A."/>
            <person name="Borchert S."/>
            <person name="Borriss R."/>
            <person name="Boursier L."/>
            <person name="Brans A."/>
            <person name="Braun M."/>
            <person name="Brignell S.C."/>
            <person name="Bron S."/>
            <person name="Brouillet S."/>
            <person name="Bruschi C.V."/>
            <person name="Caldwell B."/>
            <person name="Capuano V."/>
            <person name="Carter N.M."/>
            <person name="Choi S.-K."/>
            <person name="Codani J.-J."/>
            <person name="Connerton I.F."/>
            <person name="Cummings N.J."/>
            <person name="Daniel R.A."/>
            <person name="Denizot F."/>
            <person name="Devine K.M."/>
            <person name="Duesterhoeft A."/>
            <person name="Ehrlich S.D."/>
            <person name="Emmerson P.T."/>
            <person name="Entian K.-D."/>
            <person name="Errington J."/>
            <person name="Fabret C."/>
            <person name="Ferrari E."/>
            <person name="Foulger D."/>
            <person name="Fritz C."/>
            <person name="Fujita M."/>
            <person name="Fujita Y."/>
            <person name="Fuma S."/>
            <person name="Galizzi A."/>
            <person name="Galleron N."/>
            <person name="Ghim S.-Y."/>
            <person name="Glaser P."/>
            <person name="Goffeau A."/>
            <person name="Golightly E.J."/>
            <person name="Grandi G."/>
            <person name="Guiseppi G."/>
            <person name="Guy B.J."/>
            <person name="Haga K."/>
            <person name="Haiech J."/>
            <person name="Harwood C.R."/>
            <person name="Henaut A."/>
            <person name="Hilbert H."/>
            <person name="Holsappel S."/>
            <person name="Hosono S."/>
            <person name="Hullo M.-F."/>
            <person name="Itaya M."/>
            <person name="Jones L.-M."/>
            <person name="Joris B."/>
            <person name="Karamata D."/>
            <person name="Kasahara Y."/>
            <person name="Klaerr-Blanchard M."/>
            <person name="Klein C."/>
            <person name="Kobayashi Y."/>
            <person name="Koetter P."/>
            <person name="Koningstein G."/>
            <person name="Krogh S."/>
            <person name="Kumano M."/>
            <person name="Kurita K."/>
            <person name="Lapidus A."/>
            <person name="Lardinois S."/>
            <person name="Lauber J."/>
            <person name="Lazarevic V."/>
            <person name="Lee S.-M."/>
            <person name="Levine A."/>
            <person name="Liu H."/>
            <person name="Masuda S."/>
            <person name="Mauel C."/>
            <person name="Medigue C."/>
            <person name="Medina N."/>
            <person name="Mellado R.P."/>
            <person name="Mizuno M."/>
            <person name="Moestl D."/>
            <person name="Nakai S."/>
            <person name="Noback M."/>
            <person name="Noone D."/>
            <person name="O'Reilly M."/>
            <person name="Ogawa K."/>
            <person name="Ogiwara A."/>
            <person name="Oudega B."/>
            <person name="Park S.-H."/>
            <person name="Parro V."/>
            <person name="Pohl T.M."/>
            <person name="Portetelle D."/>
            <person name="Porwollik S."/>
            <person name="Prescott A.M."/>
            <person name="Presecan E."/>
            <person name="Pujic P."/>
            <person name="Purnelle B."/>
            <person name="Rapoport G."/>
            <person name="Rey M."/>
            <person name="Reynolds S."/>
            <person name="Rieger M."/>
            <person name="Rivolta C."/>
            <person name="Rocha E."/>
            <person name="Roche B."/>
            <person name="Rose M."/>
            <person name="Sadaie Y."/>
            <person name="Sato T."/>
            <person name="Scanlan E."/>
            <person name="Schleich S."/>
            <person name="Schroeter R."/>
            <person name="Scoffone F."/>
            <person name="Sekiguchi J."/>
            <person name="Sekowska A."/>
            <person name="Seror S.J."/>
            <person name="Serror P."/>
            <person name="Shin B.-S."/>
            <person name="Soldo B."/>
            <person name="Sorokin A."/>
            <person name="Tacconi E."/>
            <person name="Takagi T."/>
            <person name="Takahashi H."/>
            <person name="Takemaru K."/>
            <person name="Takeuchi M."/>
            <person name="Tamakoshi A."/>
            <person name="Tanaka T."/>
            <person name="Terpstra P."/>
            <person name="Tognoni A."/>
            <person name="Tosato V."/>
            <person name="Uchiyama S."/>
            <person name="Vandenbol M."/>
            <person name="Vannier F."/>
            <person name="Vassarotti A."/>
            <person name="Viari A."/>
            <person name="Wambutt R."/>
            <person name="Wedler E."/>
            <person name="Wedler H."/>
            <person name="Weitzenegger T."/>
            <person name="Winters P."/>
            <person name="Wipat A."/>
            <person name="Yamamoto H."/>
            <person name="Yamane K."/>
            <person name="Yasumoto K."/>
            <person name="Yata K."/>
            <person name="Yoshida K."/>
            <person name="Yoshikawa H.-F."/>
            <person name="Zumstein E."/>
            <person name="Yoshikawa H."/>
            <person name="Danchin A."/>
        </authorList>
    </citation>
    <scope>NUCLEOTIDE SEQUENCE [LARGE SCALE GENOMIC DNA]</scope>
    <source>
        <strain>168</strain>
    </source>
</reference>
<dbReference type="EMBL" id="AL009126">
    <property type="protein sequence ID" value="CAB15226.1"/>
    <property type="molecule type" value="Genomic_DNA"/>
</dbReference>
<dbReference type="PIR" id="F70015">
    <property type="entry name" value="F70015"/>
</dbReference>
<dbReference type="RefSeq" id="NP_391116.1">
    <property type="nucleotide sequence ID" value="NC_000964.3"/>
</dbReference>
<dbReference type="RefSeq" id="WP_003242587.1">
    <property type="nucleotide sequence ID" value="NZ_OZ025638.1"/>
</dbReference>
<dbReference type="SMR" id="O32132"/>
<dbReference type="FunCoup" id="O32132">
    <property type="interactions" value="3"/>
</dbReference>
<dbReference type="STRING" id="224308.BSU32360"/>
<dbReference type="PaxDb" id="224308-BSU32360"/>
<dbReference type="EnsemblBacteria" id="CAB15226">
    <property type="protein sequence ID" value="CAB15226"/>
    <property type="gene ID" value="BSU_32360"/>
</dbReference>
<dbReference type="GeneID" id="936679"/>
<dbReference type="KEGG" id="bsu:BSU32360"/>
<dbReference type="PATRIC" id="fig|224308.179.peg.3503"/>
<dbReference type="eggNOG" id="COG3377">
    <property type="taxonomic scope" value="Bacteria"/>
</dbReference>
<dbReference type="InParanoid" id="O32132"/>
<dbReference type="OrthoDB" id="2641826at2"/>
<dbReference type="BioCyc" id="BSUB:BSU32360-MONOMER"/>
<dbReference type="Proteomes" id="UP000001570">
    <property type="component" value="Chromosome"/>
</dbReference>
<dbReference type="Gene3D" id="3.30.1980.10">
    <property type="entry name" value="Hypothetical protein YunC"/>
    <property type="match status" value="1"/>
</dbReference>
<dbReference type="InterPro" id="IPR014931">
    <property type="entry name" value="DUF1805"/>
</dbReference>
<dbReference type="InterPro" id="IPR036493">
    <property type="entry name" value="YunC_sf"/>
</dbReference>
<dbReference type="Pfam" id="PF08827">
    <property type="entry name" value="DUF1805"/>
    <property type="match status" value="1"/>
</dbReference>
<dbReference type="SUPFAM" id="SSF102891">
    <property type="entry name" value="Hypothetical protein Ta1206"/>
    <property type="match status" value="1"/>
</dbReference>
<sequence>MVNLTPIMIEGQPFTAVTVKLPKTNFMAVANDHGYIMCGALDVALLNEKLKERGIVAGRAVGVRTIDQLLDAPLESVTYAAEDLGIKVGMSGREALLKMMK</sequence>
<name>YUNC_BACSU</name>
<proteinExistence type="predicted"/>
<protein>
    <recommendedName>
        <fullName>Uncharacterized protein YunC</fullName>
    </recommendedName>
</protein>
<keyword id="KW-1185">Reference proteome</keyword>